<dbReference type="EC" id="5.4.2.12" evidence="1"/>
<dbReference type="EMBL" id="CP001400">
    <property type="protein sequence ID" value="ACP38436.1"/>
    <property type="molecule type" value="Genomic_DNA"/>
</dbReference>
<dbReference type="RefSeq" id="WP_012711667.1">
    <property type="nucleotide sequence ID" value="NC_012588.1"/>
</dbReference>
<dbReference type="SMR" id="C3MWY6"/>
<dbReference type="KEGG" id="sia:M1425_1687"/>
<dbReference type="HOGENOM" id="CLU_034906_2_0_2"/>
<dbReference type="UniPathway" id="UPA00109">
    <property type="reaction ID" value="UER00186"/>
</dbReference>
<dbReference type="Proteomes" id="UP000001350">
    <property type="component" value="Chromosome"/>
</dbReference>
<dbReference type="GO" id="GO:0046872">
    <property type="term" value="F:metal ion binding"/>
    <property type="evidence" value="ECO:0007669"/>
    <property type="project" value="InterPro"/>
</dbReference>
<dbReference type="GO" id="GO:0004619">
    <property type="term" value="F:phosphoglycerate mutase activity"/>
    <property type="evidence" value="ECO:0007669"/>
    <property type="project" value="UniProtKB-EC"/>
</dbReference>
<dbReference type="GO" id="GO:0006096">
    <property type="term" value="P:glycolytic process"/>
    <property type="evidence" value="ECO:0007669"/>
    <property type="project" value="UniProtKB-UniRule"/>
</dbReference>
<dbReference type="CDD" id="cd16011">
    <property type="entry name" value="iPGM_like"/>
    <property type="match status" value="1"/>
</dbReference>
<dbReference type="Gene3D" id="3.40.720.10">
    <property type="entry name" value="Alkaline Phosphatase, subunit A"/>
    <property type="match status" value="1"/>
</dbReference>
<dbReference type="Gene3D" id="3.30.70.2130">
    <property type="entry name" value="Metalloenzyme domain"/>
    <property type="match status" value="1"/>
</dbReference>
<dbReference type="HAMAP" id="MF_01402_A">
    <property type="entry name" value="ApgM_A"/>
    <property type="match status" value="1"/>
</dbReference>
<dbReference type="InterPro" id="IPR017850">
    <property type="entry name" value="Alkaline_phosphatase_core_sf"/>
</dbReference>
<dbReference type="InterPro" id="IPR023665">
    <property type="entry name" value="ApgAM_prokaryotes"/>
</dbReference>
<dbReference type="InterPro" id="IPR006124">
    <property type="entry name" value="Metalloenzyme"/>
</dbReference>
<dbReference type="InterPro" id="IPR004456">
    <property type="entry name" value="Pglycerate_mutase_ApgM"/>
</dbReference>
<dbReference type="InterPro" id="IPR042253">
    <property type="entry name" value="Pglycerate_mutase_ApgM_sf"/>
</dbReference>
<dbReference type="NCBIfam" id="TIGR00306">
    <property type="entry name" value="apgM"/>
    <property type="match status" value="1"/>
</dbReference>
<dbReference type="NCBIfam" id="NF003104">
    <property type="entry name" value="PRK04024.1"/>
    <property type="match status" value="1"/>
</dbReference>
<dbReference type="PANTHER" id="PTHR31209">
    <property type="entry name" value="COFACTOR-INDEPENDENT PHOSPHOGLYCERATE MUTASE"/>
    <property type="match status" value="1"/>
</dbReference>
<dbReference type="PANTHER" id="PTHR31209:SF0">
    <property type="entry name" value="METALLOENZYME DOMAIN-CONTAINING PROTEIN"/>
    <property type="match status" value="1"/>
</dbReference>
<dbReference type="Pfam" id="PF01676">
    <property type="entry name" value="Metalloenzyme"/>
    <property type="match status" value="1"/>
</dbReference>
<dbReference type="Pfam" id="PF10143">
    <property type="entry name" value="PhosphMutase"/>
    <property type="match status" value="1"/>
</dbReference>
<dbReference type="PIRSF" id="PIRSF006392">
    <property type="entry name" value="IPGAM_arch"/>
    <property type="match status" value="1"/>
</dbReference>
<dbReference type="SUPFAM" id="SSF53649">
    <property type="entry name" value="Alkaline phosphatase-like"/>
    <property type="match status" value="1"/>
</dbReference>
<gene>
    <name evidence="1" type="primary">apgM</name>
    <name type="ordered locus">M1425_1687</name>
</gene>
<evidence type="ECO:0000255" key="1">
    <source>
        <dbReference type="HAMAP-Rule" id="MF_01402"/>
    </source>
</evidence>
<organism>
    <name type="scientific">Saccharolobus islandicus (strain M.14.25 / Kamchatka #1)</name>
    <name type="common">Sulfolobus islandicus</name>
    <dbReference type="NCBI Taxonomy" id="427317"/>
    <lineage>
        <taxon>Archaea</taxon>
        <taxon>Thermoproteota</taxon>
        <taxon>Thermoprotei</taxon>
        <taxon>Sulfolobales</taxon>
        <taxon>Sulfolobaceae</taxon>
        <taxon>Saccharolobus</taxon>
    </lineage>
</organism>
<feature type="chain" id="PRO_1000215194" description="2,3-bisphosphoglycerate-independent phosphoglycerate mutase">
    <location>
        <begin position="1"/>
        <end position="414"/>
    </location>
</feature>
<reference key="1">
    <citation type="journal article" date="2009" name="Proc. Natl. Acad. Sci. U.S.A.">
        <title>Biogeography of the Sulfolobus islandicus pan-genome.</title>
        <authorList>
            <person name="Reno M.L."/>
            <person name="Held N.L."/>
            <person name="Fields C.J."/>
            <person name="Burke P.V."/>
            <person name="Whitaker R.J."/>
        </authorList>
    </citation>
    <scope>NUCLEOTIDE SEQUENCE [LARGE SCALE GENOMIC DNA]</scope>
    <source>
        <strain>M.14.25 / Kamchatka #1</strain>
    </source>
</reference>
<accession>C3MWY6</accession>
<keyword id="KW-0324">Glycolysis</keyword>
<keyword id="KW-0413">Isomerase</keyword>
<name>APGM_SACI4</name>
<comment type="function">
    <text evidence="1">Catalyzes the interconversion of 2-phosphoglycerate and 3-phosphoglycerate.</text>
</comment>
<comment type="catalytic activity">
    <reaction evidence="1">
        <text>(2R)-2-phosphoglycerate = (2R)-3-phosphoglycerate</text>
        <dbReference type="Rhea" id="RHEA:15901"/>
        <dbReference type="ChEBI" id="CHEBI:58272"/>
        <dbReference type="ChEBI" id="CHEBI:58289"/>
        <dbReference type="EC" id="5.4.2.12"/>
    </reaction>
</comment>
<comment type="pathway">
    <text evidence="1">Carbohydrate degradation; glycolysis; pyruvate from D-glyceraldehyde 3-phosphate: step 3/5.</text>
</comment>
<comment type="similarity">
    <text evidence="1">Belongs to the BPG-independent phosphoglycerate mutase family. A-PGAM subfamily.</text>
</comment>
<proteinExistence type="inferred from homology"/>
<protein>
    <recommendedName>
        <fullName evidence="1">2,3-bisphosphoglycerate-independent phosphoglycerate mutase</fullName>
        <shortName evidence="1">BPG-independent PGAM</shortName>
        <shortName evidence="1">Phosphoglyceromutase</shortName>
        <shortName evidence="1">aPGAM</shortName>
        <ecNumber evidence="1">5.4.2.12</ecNumber>
    </recommendedName>
</protein>
<sequence>MKQYKILLIIADGLGDRPVSKLNGLTPLEAANKPAISDLLKSSMIGLMDPISPGVIPGSDTSHLSIFGLDPHVYYRGRGAFEALGAGATLKHGDVAFRGNFATVNNDLVVVDRRAGRKLEEGEELVKELNEKIKEINDVKIRFYKGTEHRVAVVLSGKGISDKVSDTDPHYEGLKVLESKPLEDSTEALRTAEIINILTRKVFDVLNSSEVNKRRIEQGEKPANIVLLRGAAHYVKLPSFSSYTKLKAAAVSATALIKGICRELGMNVVTPVGATGGIDTNYNAKAKAAIELLKENDFVFLHIKATDAASHDGLVEEKVKAIERIDKVIGTIVDNVGRDNLILMFTGDHATPVEVKEHSGDPVPILLYVPYPIINDNVKDFNEKEARKGSLRIRGLDVTNILLNYSNRAEKYGA</sequence>